<proteinExistence type="inferred from homology"/>
<feature type="chain" id="PRO_0000321161" description="Aspartate carbamoyltransferase catalytic subunit">
    <location>
        <begin position="1"/>
        <end position="344"/>
    </location>
</feature>
<feature type="region of interest" description="Disordered" evidence="2">
    <location>
        <begin position="1"/>
        <end position="30"/>
    </location>
</feature>
<feature type="binding site" evidence="1">
    <location>
        <position position="88"/>
    </location>
    <ligand>
        <name>carbamoyl phosphate</name>
        <dbReference type="ChEBI" id="CHEBI:58228"/>
    </ligand>
</feature>
<feature type="binding site" evidence="1">
    <location>
        <position position="89"/>
    </location>
    <ligand>
        <name>carbamoyl phosphate</name>
        <dbReference type="ChEBI" id="CHEBI:58228"/>
    </ligand>
</feature>
<feature type="binding site" evidence="1">
    <location>
        <position position="116"/>
    </location>
    <ligand>
        <name>L-aspartate</name>
        <dbReference type="ChEBI" id="CHEBI:29991"/>
    </ligand>
</feature>
<feature type="binding site" evidence="1">
    <location>
        <position position="138"/>
    </location>
    <ligand>
        <name>carbamoyl phosphate</name>
        <dbReference type="ChEBI" id="CHEBI:58228"/>
    </ligand>
</feature>
<feature type="binding site" evidence="1">
    <location>
        <position position="166"/>
    </location>
    <ligand>
        <name>carbamoyl phosphate</name>
        <dbReference type="ChEBI" id="CHEBI:58228"/>
    </ligand>
</feature>
<feature type="binding site" evidence="1">
    <location>
        <position position="169"/>
    </location>
    <ligand>
        <name>carbamoyl phosphate</name>
        <dbReference type="ChEBI" id="CHEBI:58228"/>
    </ligand>
</feature>
<feature type="binding site" evidence="1">
    <location>
        <position position="199"/>
    </location>
    <ligand>
        <name>L-aspartate</name>
        <dbReference type="ChEBI" id="CHEBI:29991"/>
    </ligand>
</feature>
<feature type="binding site" evidence="1">
    <location>
        <position position="253"/>
    </location>
    <ligand>
        <name>L-aspartate</name>
        <dbReference type="ChEBI" id="CHEBI:29991"/>
    </ligand>
</feature>
<feature type="binding site" evidence="1">
    <location>
        <position position="294"/>
    </location>
    <ligand>
        <name>carbamoyl phosphate</name>
        <dbReference type="ChEBI" id="CHEBI:58228"/>
    </ligand>
</feature>
<feature type="binding site" evidence="1">
    <location>
        <position position="295"/>
    </location>
    <ligand>
        <name>carbamoyl phosphate</name>
        <dbReference type="ChEBI" id="CHEBI:58228"/>
    </ligand>
</feature>
<evidence type="ECO:0000255" key="1">
    <source>
        <dbReference type="HAMAP-Rule" id="MF_00001"/>
    </source>
</evidence>
<evidence type="ECO:0000256" key="2">
    <source>
        <dbReference type="SAM" id="MobiDB-lite"/>
    </source>
</evidence>
<accession>Q1GUN0</accession>
<reference key="1">
    <citation type="journal article" date="2009" name="Proc. Natl. Acad. Sci. U.S.A.">
        <title>The genomic basis of trophic strategy in marine bacteria.</title>
        <authorList>
            <person name="Lauro F.M."/>
            <person name="McDougald D."/>
            <person name="Thomas T."/>
            <person name="Williams T.J."/>
            <person name="Egan S."/>
            <person name="Rice S."/>
            <person name="DeMaere M.Z."/>
            <person name="Ting L."/>
            <person name="Ertan H."/>
            <person name="Johnson J."/>
            <person name="Ferriera S."/>
            <person name="Lapidus A."/>
            <person name="Anderson I."/>
            <person name="Kyrpides N."/>
            <person name="Munk A.C."/>
            <person name="Detter C."/>
            <person name="Han C.S."/>
            <person name="Brown M.V."/>
            <person name="Robb F.T."/>
            <person name="Kjelleberg S."/>
            <person name="Cavicchioli R."/>
        </authorList>
    </citation>
    <scope>NUCLEOTIDE SEQUENCE [LARGE SCALE GENOMIC DNA]</scope>
    <source>
        <strain>DSM 13593 / LMG 18877 / RB2256</strain>
    </source>
</reference>
<keyword id="KW-0665">Pyrimidine biosynthesis</keyword>
<keyword id="KW-1185">Reference proteome</keyword>
<keyword id="KW-0808">Transferase</keyword>
<gene>
    <name evidence="1" type="primary">pyrB</name>
    <name type="ordered locus">Sala_0924</name>
</gene>
<dbReference type="EC" id="2.1.3.2" evidence="1"/>
<dbReference type="EMBL" id="CP000356">
    <property type="protein sequence ID" value="ABF52642.1"/>
    <property type="molecule type" value="Genomic_DNA"/>
</dbReference>
<dbReference type="SMR" id="Q1GUN0"/>
<dbReference type="STRING" id="317655.Sala_0924"/>
<dbReference type="KEGG" id="sal:Sala_0924"/>
<dbReference type="eggNOG" id="COG0540">
    <property type="taxonomic scope" value="Bacteria"/>
</dbReference>
<dbReference type="HOGENOM" id="CLU_043846_2_0_5"/>
<dbReference type="UniPathway" id="UPA00070">
    <property type="reaction ID" value="UER00116"/>
</dbReference>
<dbReference type="Proteomes" id="UP000006578">
    <property type="component" value="Chromosome"/>
</dbReference>
<dbReference type="GO" id="GO:0005829">
    <property type="term" value="C:cytosol"/>
    <property type="evidence" value="ECO:0007669"/>
    <property type="project" value="TreeGrafter"/>
</dbReference>
<dbReference type="GO" id="GO:0016597">
    <property type="term" value="F:amino acid binding"/>
    <property type="evidence" value="ECO:0007669"/>
    <property type="project" value="InterPro"/>
</dbReference>
<dbReference type="GO" id="GO:0004070">
    <property type="term" value="F:aspartate carbamoyltransferase activity"/>
    <property type="evidence" value="ECO:0007669"/>
    <property type="project" value="UniProtKB-UniRule"/>
</dbReference>
<dbReference type="GO" id="GO:0006207">
    <property type="term" value="P:'de novo' pyrimidine nucleobase biosynthetic process"/>
    <property type="evidence" value="ECO:0007669"/>
    <property type="project" value="InterPro"/>
</dbReference>
<dbReference type="GO" id="GO:0044205">
    <property type="term" value="P:'de novo' UMP biosynthetic process"/>
    <property type="evidence" value="ECO:0007669"/>
    <property type="project" value="UniProtKB-UniRule"/>
</dbReference>
<dbReference type="GO" id="GO:0006520">
    <property type="term" value="P:amino acid metabolic process"/>
    <property type="evidence" value="ECO:0007669"/>
    <property type="project" value="InterPro"/>
</dbReference>
<dbReference type="FunFam" id="3.40.50.1370:FF:000007">
    <property type="entry name" value="Aspartate carbamoyltransferase"/>
    <property type="match status" value="1"/>
</dbReference>
<dbReference type="Gene3D" id="3.40.50.1370">
    <property type="entry name" value="Aspartate/ornithine carbamoyltransferase"/>
    <property type="match status" value="2"/>
</dbReference>
<dbReference type="HAMAP" id="MF_00001">
    <property type="entry name" value="Asp_carb_tr"/>
    <property type="match status" value="1"/>
</dbReference>
<dbReference type="InterPro" id="IPR006132">
    <property type="entry name" value="Asp/Orn_carbamoyltranf_P-bd"/>
</dbReference>
<dbReference type="InterPro" id="IPR006130">
    <property type="entry name" value="Asp/Orn_carbamoylTrfase"/>
</dbReference>
<dbReference type="InterPro" id="IPR036901">
    <property type="entry name" value="Asp/Orn_carbamoylTrfase_sf"/>
</dbReference>
<dbReference type="InterPro" id="IPR002082">
    <property type="entry name" value="Asp_carbamoyltransf"/>
</dbReference>
<dbReference type="InterPro" id="IPR006131">
    <property type="entry name" value="Asp_carbamoyltransf_Asp/Orn-bd"/>
</dbReference>
<dbReference type="NCBIfam" id="TIGR00670">
    <property type="entry name" value="asp_carb_tr"/>
    <property type="match status" value="1"/>
</dbReference>
<dbReference type="NCBIfam" id="NF002032">
    <property type="entry name" value="PRK00856.1"/>
    <property type="match status" value="1"/>
</dbReference>
<dbReference type="PANTHER" id="PTHR45753:SF6">
    <property type="entry name" value="ASPARTATE CARBAMOYLTRANSFERASE"/>
    <property type="match status" value="1"/>
</dbReference>
<dbReference type="PANTHER" id="PTHR45753">
    <property type="entry name" value="ORNITHINE CARBAMOYLTRANSFERASE, MITOCHONDRIAL"/>
    <property type="match status" value="1"/>
</dbReference>
<dbReference type="Pfam" id="PF00185">
    <property type="entry name" value="OTCace"/>
    <property type="match status" value="1"/>
</dbReference>
<dbReference type="Pfam" id="PF02729">
    <property type="entry name" value="OTCace_N"/>
    <property type="match status" value="1"/>
</dbReference>
<dbReference type="PRINTS" id="PR00100">
    <property type="entry name" value="AOTCASE"/>
</dbReference>
<dbReference type="PRINTS" id="PR00101">
    <property type="entry name" value="ATCASE"/>
</dbReference>
<dbReference type="SUPFAM" id="SSF53671">
    <property type="entry name" value="Aspartate/ornithine carbamoyltransferase"/>
    <property type="match status" value="1"/>
</dbReference>
<dbReference type="PROSITE" id="PS00097">
    <property type="entry name" value="CARBAMOYLTRANSFERASE"/>
    <property type="match status" value="1"/>
</dbReference>
<sequence>MPESPPLPKRSPLMTSSTTRPASDYPPGGDAFRHRHLTGIAQLTPWEISYILDAAEEWVELNRSGAAKHDDRLAGLTIINAFFENSTRTLLSFEIAGKRLGADVVNMHAAQSSVKKGETLIDTAMTLNAMRADAIVIRHASSGAVQLIADKVDCPVLNAGDGRHEHPTQALLDALTIRRRLGRVEGLAIAICGDVLHSRVARSNILALTLLGNEVRVVAPATLTPPAMERMHVRCFTDMDEGLKGADVVMMLRLQNERMDGAHLPSAREYHALYGLTPQRLEKAKPDAIVMHPGPMNRGVEIDSSVADDHARSTITEQVEMGVAVRMACLDILTRRQRGVPGWN</sequence>
<comment type="function">
    <text evidence="1">Catalyzes the condensation of carbamoyl phosphate and aspartate to form carbamoyl aspartate and inorganic phosphate, the committed step in the de novo pyrimidine nucleotide biosynthesis pathway.</text>
</comment>
<comment type="catalytic activity">
    <reaction evidence="1">
        <text>carbamoyl phosphate + L-aspartate = N-carbamoyl-L-aspartate + phosphate + H(+)</text>
        <dbReference type="Rhea" id="RHEA:20013"/>
        <dbReference type="ChEBI" id="CHEBI:15378"/>
        <dbReference type="ChEBI" id="CHEBI:29991"/>
        <dbReference type="ChEBI" id="CHEBI:32814"/>
        <dbReference type="ChEBI" id="CHEBI:43474"/>
        <dbReference type="ChEBI" id="CHEBI:58228"/>
        <dbReference type="EC" id="2.1.3.2"/>
    </reaction>
</comment>
<comment type="pathway">
    <text evidence="1">Pyrimidine metabolism; UMP biosynthesis via de novo pathway; (S)-dihydroorotate from bicarbonate: step 2/3.</text>
</comment>
<comment type="subunit">
    <text evidence="1">Heterododecamer (2C3:3R2) of six catalytic PyrB chains organized as two trimers (C3), and six regulatory PyrI chains organized as three dimers (R2).</text>
</comment>
<comment type="similarity">
    <text evidence="1">Belongs to the aspartate/ornithine carbamoyltransferase superfamily. ATCase family.</text>
</comment>
<organism>
    <name type="scientific">Sphingopyxis alaskensis (strain DSM 13593 / LMG 18877 / RB2256)</name>
    <name type="common">Sphingomonas alaskensis</name>
    <dbReference type="NCBI Taxonomy" id="317655"/>
    <lineage>
        <taxon>Bacteria</taxon>
        <taxon>Pseudomonadati</taxon>
        <taxon>Pseudomonadota</taxon>
        <taxon>Alphaproteobacteria</taxon>
        <taxon>Sphingomonadales</taxon>
        <taxon>Sphingomonadaceae</taxon>
        <taxon>Sphingopyxis</taxon>
    </lineage>
</organism>
<protein>
    <recommendedName>
        <fullName evidence="1">Aspartate carbamoyltransferase catalytic subunit</fullName>
        <ecNumber evidence="1">2.1.3.2</ecNumber>
    </recommendedName>
    <alternativeName>
        <fullName evidence="1">Aspartate transcarbamylase</fullName>
        <shortName evidence="1">ATCase</shortName>
    </alternativeName>
</protein>
<name>PYRB_SPHAL</name>